<name>COX3_LOCMI</name>
<accession>P14574</accession>
<dbReference type="EC" id="7.1.1.9"/>
<dbReference type="EMBL" id="X13975">
    <property type="protein sequence ID" value="CAA32156.1"/>
    <property type="molecule type" value="Genomic_DNA"/>
</dbReference>
<dbReference type="EMBL" id="X80245">
    <property type="protein sequence ID" value="CAA56529.1"/>
    <property type="molecule type" value="Genomic_DNA"/>
</dbReference>
<dbReference type="PIR" id="T11469">
    <property type="entry name" value="T11469"/>
</dbReference>
<dbReference type="RefSeq" id="NP_007295.1">
    <property type="nucleotide sequence ID" value="NC_001712.1"/>
</dbReference>
<dbReference type="SMR" id="P14574"/>
<dbReference type="GeneID" id="807961"/>
<dbReference type="CTD" id="4514"/>
<dbReference type="GO" id="GO:0005743">
    <property type="term" value="C:mitochondrial inner membrane"/>
    <property type="evidence" value="ECO:0007669"/>
    <property type="project" value="UniProtKB-SubCell"/>
</dbReference>
<dbReference type="GO" id="GO:0004129">
    <property type="term" value="F:cytochrome-c oxidase activity"/>
    <property type="evidence" value="ECO:0007669"/>
    <property type="project" value="UniProtKB-EC"/>
</dbReference>
<dbReference type="GO" id="GO:0006123">
    <property type="term" value="P:mitochondrial electron transport, cytochrome c to oxygen"/>
    <property type="evidence" value="ECO:0007669"/>
    <property type="project" value="TreeGrafter"/>
</dbReference>
<dbReference type="CDD" id="cd01665">
    <property type="entry name" value="Cyt_c_Oxidase_III"/>
    <property type="match status" value="1"/>
</dbReference>
<dbReference type="FunFam" id="1.10.287.70:FF:000082">
    <property type="entry name" value="Cytochrome c oxidase subunit 3"/>
    <property type="match status" value="1"/>
</dbReference>
<dbReference type="FunFam" id="1.20.120.80:FF:000002">
    <property type="entry name" value="Cytochrome c oxidase subunit 3"/>
    <property type="match status" value="1"/>
</dbReference>
<dbReference type="Gene3D" id="1.10.287.70">
    <property type="match status" value="1"/>
</dbReference>
<dbReference type="Gene3D" id="1.20.120.80">
    <property type="entry name" value="Cytochrome c oxidase, subunit III, four-helix bundle"/>
    <property type="match status" value="1"/>
</dbReference>
<dbReference type="InterPro" id="IPR024791">
    <property type="entry name" value="Cyt_c/ubiquinol_Oxase_su3"/>
</dbReference>
<dbReference type="InterPro" id="IPR033945">
    <property type="entry name" value="Cyt_c_oxase_su3_dom"/>
</dbReference>
<dbReference type="InterPro" id="IPR000298">
    <property type="entry name" value="Cyt_c_oxidase-like_su3"/>
</dbReference>
<dbReference type="InterPro" id="IPR035973">
    <property type="entry name" value="Cyt_c_oxidase_su3-like_sf"/>
</dbReference>
<dbReference type="InterPro" id="IPR013833">
    <property type="entry name" value="Cyt_c_oxidase_su3_a-hlx"/>
</dbReference>
<dbReference type="PANTHER" id="PTHR11403:SF7">
    <property type="entry name" value="CYTOCHROME C OXIDASE SUBUNIT 3"/>
    <property type="match status" value="1"/>
</dbReference>
<dbReference type="PANTHER" id="PTHR11403">
    <property type="entry name" value="CYTOCHROME C OXIDASE SUBUNIT III"/>
    <property type="match status" value="1"/>
</dbReference>
<dbReference type="Pfam" id="PF00510">
    <property type="entry name" value="COX3"/>
    <property type="match status" value="1"/>
</dbReference>
<dbReference type="SUPFAM" id="SSF81452">
    <property type="entry name" value="Cytochrome c oxidase subunit III-like"/>
    <property type="match status" value="1"/>
</dbReference>
<dbReference type="PROSITE" id="PS50253">
    <property type="entry name" value="COX3"/>
    <property type="match status" value="1"/>
</dbReference>
<proteinExistence type="inferred from homology"/>
<geneLocation type="mitochondrion"/>
<feature type="chain" id="PRO_0000183800" description="Cytochrome c oxidase subunit 3">
    <location>
        <begin position="1"/>
        <end position="263"/>
    </location>
</feature>
<feature type="transmembrane region" description="Helical" evidence="2">
    <location>
        <begin position="9"/>
        <end position="29"/>
    </location>
</feature>
<feature type="transmembrane region" description="Helical" evidence="2">
    <location>
        <begin position="40"/>
        <end position="60"/>
    </location>
</feature>
<feature type="transmembrane region" description="Helical" evidence="2">
    <location>
        <begin position="84"/>
        <end position="104"/>
    </location>
</feature>
<feature type="transmembrane region" description="Helical" evidence="2">
    <location>
        <begin position="129"/>
        <end position="149"/>
    </location>
</feature>
<feature type="transmembrane region" description="Helical" evidence="2">
    <location>
        <begin position="161"/>
        <end position="181"/>
    </location>
</feature>
<feature type="transmembrane region" description="Helical" evidence="2">
    <location>
        <begin position="198"/>
        <end position="218"/>
    </location>
</feature>
<feature type="transmembrane region" description="Helical" evidence="2">
    <location>
        <begin position="241"/>
        <end position="261"/>
    </location>
</feature>
<organism>
    <name type="scientific">Locusta migratoria</name>
    <name type="common">Migratory locust</name>
    <dbReference type="NCBI Taxonomy" id="7004"/>
    <lineage>
        <taxon>Eukaryota</taxon>
        <taxon>Metazoa</taxon>
        <taxon>Ecdysozoa</taxon>
        <taxon>Arthropoda</taxon>
        <taxon>Hexapoda</taxon>
        <taxon>Insecta</taxon>
        <taxon>Pterygota</taxon>
        <taxon>Neoptera</taxon>
        <taxon>Polyneoptera</taxon>
        <taxon>Orthoptera</taxon>
        <taxon>Caelifera</taxon>
        <taxon>Acrididea</taxon>
        <taxon>Acridomorpha</taxon>
        <taxon>Acridoidea</taxon>
        <taxon>Acrididae</taxon>
        <taxon>Oedipodinae</taxon>
        <taxon>Locusta</taxon>
    </lineage>
</organism>
<comment type="function">
    <text evidence="1">Component of the cytochrome c oxidase, the last enzyme in the mitochondrial electron transport chain which drives oxidative phosphorylation. The respiratory chain contains 3 multisubunit complexes succinate dehydrogenase (complex II, CII), ubiquinol-cytochrome c oxidoreductase (cytochrome b-c1 complex, complex III, CIII) and cytochrome c oxidase (complex IV, CIV), that cooperate to transfer electrons derived from NADH and succinate to molecular oxygen, creating an electrochemical gradient over the inner membrane that drives transmembrane transport and the ATP synthase. Cytochrome c oxidase is the component of the respiratory chain that catalyzes the reduction of oxygen to water. Electrons originating from reduced cytochrome c in the intermembrane space (IMS) are transferred via the dinuclear copper A center (CU(A)) of subunit 2 and heme A of subunit 1 to the active site in subunit 1, a binuclear center (BNC) formed by heme A3 and copper B (CU(B)). The BNC reduces molecular oxygen to 2 water molecules using 4 electrons from cytochrome c in the IMS and 4 protons from the mitochondrial matrix.</text>
</comment>
<comment type="catalytic activity">
    <reaction evidence="1">
        <text>4 Fe(II)-[cytochrome c] + O2 + 8 H(+)(in) = 4 Fe(III)-[cytochrome c] + 2 H2O + 4 H(+)(out)</text>
        <dbReference type="Rhea" id="RHEA:11436"/>
        <dbReference type="Rhea" id="RHEA-COMP:10350"/>
        <dbReference type="Rhea" id="RHEA-COMP:14399"/>
        <dbReference type="ChEBI" id="CHEBI:15377"/>
        <dbReference type="ChEBI" id="CHEBI:15378"/>
        <dbReference type="ChEBI" id="CHEBI:15379"/>
        <dbReference type="ChEBI" id="CHEBI:29033"/>
        <dbReference type="ChEBI" id="CHEBI:29034"/>
        <dbReference type="EC" id="7.1.1.9"/>
    </reaction>
    <physiologicalReaction direction="left-to-right" evidence="1">
        <dbReference type="Rhea" id="RHEA:11437"/>
    </physiologicalReaction>
</comment>
<comment type="subunit">
    <text evidence="1">Component of the cytochrome c oxidase (complex IV, CIV), a multisubunit enzyme composed of a catalytic core of 3 subunits and several supernumerary subunits. The complex exists as a monomer or a dimer and forms supercomplexes (SCs) in the inner mitochondrial membrane with ubiquinol-cytochrome c oxidoreductase (cytochrome b-c1 complex, complex III, CIII).</text>
</comment>
<comment type="subcellular location">
    <subcellularLocation>
        <location evidence="1">Mitochondrion inner membrane</location>
        <topology evidence="1">Multi-pass membrane protein</topology>
    </subcellularLocation>
</comment>
<comment type="similarity">
    <text evidence="3">Belongs to the cytochrome c oxidase subunit 3 family.</text>
</comment>
<evidence type="ECO:0000250" key="1">
    <source>
        <dbReference type="UniProtKB" id="P00420"/>
    </source>
</evidence>
<evidence type="ECO:0000255" key="2"/>
<evidence type="ECO:0000305" key="3"/>
<sequence>MLTNNNNHPFHMVDYSPWPLTGAIGAMILTSGMTKWFHTFNMNLLMIGMTVIVLTMIQWWRDVVREGTFQGLHTKLVSKGLRWGMILFIASEVLFFASFFWAFFNSSLAPTIELGMKWPPMGIQPFNPIQIPLLNTAILLASGVTITWAHHSIMECNHSQALQGLFFTVMLGFYFTLLQMYEYWEAPFTIADAVYGSTFFVATGFHGLHVIIGTTFLLTCLIRHMMNQFSSNHHFGFEAAAWYWHFVDVVWLFLYLSIYWWGS</sequence>
<gene>
    <name type="primary">COIII</name>
</gene>
<protein>
    <recommendedName>
        <fullName>Cytochrome c oxidase subunit 3</fullName>
        <ecNumber>7.1.1.9</ecNumber>
    </recommendedName>
    <alternativeName>
        <fullName>Cytochrome c oxidase polypeptide III</fullName>
    </alternativeName>
</protein>
<reference key="1">
    <citation type="journal article" date="1988" name="Curr. Genet.">
        <title>Different mitochondrial gene orders among insects: exchanged tRNA gene positions in the COII/COIII region between an orthopteran and a dipteran species.</title>
        <authorList>
            <person name="Haucke H.R."/>
            <person name="Gellissen G."/>
        </authorList>
    </citation>
    <scope>NUCLEOTIDE SEQUENCE [GENOMIC DNA]</scope>
</reference>
<reference key="2">
    <citation type="journal article" date="1995" name="J. Mol. Evol.">
        <title>The sequence, organization, and evolution of the Locusta migratoria mitochondrial genome.</title>
        <authorList>
            <person name="Flook P.K."/>
            <person name="Rowell C.H.F."/>
            <person name="Gellissen G."/>
        </authorList>
    </citation>
    <scope>NUCLEOTIDE SEQUENCE [GENOMIC DNA]</scope>
</reference>
<keyword id="KW-0472">Membrane</keyword>
<keyword id="KW-0496">Mitochondrion</keyword>
<keyword id="KW-0999">Mitochondrion inner membrane</keyword>
<keyword id="KW-1278">Translocase</keyword>
<keyword id="KW-0812">Transmembrane</keyword>
<keyword id="KW-1133">Transmembrane helix</keyword>